<name>RLMH_SHEPC</name>
<dbReference type="EC" id="2.1.1.177" evidence="1"/>
<dbReference type="EMBL" id="CP000681">
    <property type="protein sequence ID" value="ABP76587.1"/>
    <property type="molecule type" value="Genomic_DNA"/>
</dbReference>
<dbReference type="SMR" id="A4Y9F4"/>
<dbReference type="STRING" id="319224.Sputcn32_2868"/>
<dbReference type="KEGG" id="spc:Sputcn32_2868"/>
<dbReference type="eggNOG" id="COG1576">
    <property type="taxonomic scope" value="Bacteria"/>
</dbReference>
<dbReference type="HOGENOM" id="CLU_100552_1_0_6"/>
<dbReference type="GO" id="GO:0005737">
    <property type="term" value="C:cytoplasm"/>
    <property type="evidence" value="ECO:0007669"/>
    <property type="project" value="UniProtKB-SubCell"/>
</dbReference>
<dbReference type="GO" id="GO:0070038">
    <property type="term" value="F:rRNA (pseudouridine-N3-)-methyltransferase activity"/>
    <property type="evidence" value="ECO:0007669"/>
    <property type="project" value="UniProtKB-UniRule"/>
</dbReference>
<dbReference type="CDD" id="cd18081">
    <property type="entry name" value="RlmH-like"/>
    <property type="match status" value="1"/>
</dbReference>
<dbReference type="Gene3D" id="3.40.1280.10">
    <property type="match status" value="1"/>
</dbReference>
<dbReference type="HAMAP" id="MF_00658">
    <property type="entry name" value="23SrRNA_methyltr_H"/>
    <property type="match status" value="1"/>
</dbReference>
<dbReference type="InterPro" id="IPR029028">
    <property type="entry name" value="Alpha/beta_knot_MTases"/>
</dbReference>
<dbReference type="InterPro" id="IPR003742">
    <property type="entry name" value="RlmH-like"/>
</dbReference>
<dbReference type="InterPro" id="IPR029026">
    <property type="entry name" value="tRNA_m1G_MTases_N"/>
</dbReference>
<dbReference type="NCBIfam" id="NF000984">
    <property type="entry name" value="PRK00103.1-1"/>
    <property type="match status" value="1"/>
</dbReference>
<dbReference type="NCBIfam" id="NF000986">
    <property type="entry name" value="PRK00103.1-4"/>
    <property type="match status" value="1"/>
</dbReference>
<dbReference type="NCBIfam" id="TIGR00246">
    <property type="entry name" value="tRNA_RlmH_YbeA"/>
    <property type="match status" value="1"/>
</dbReference>
<dbReference type="PANTHER" id="PTHR33603">
    <property type="entry name" value="METHYLTRANSFERASE"/>
    <property type="match status" value="1"/>
</dbReference>
<dbReference type="PANTHER" id="PTHR33603:SF1">
    <property type="entry name" value="RIBOSOMAL RNA LARGE SUBUNIT METHYLTRANSFERASE H"/>
    <property type="match status" value="1"/>
</dbReference>
<dbReference type="Pfam" id="PF02590">
    <property type="entry name" value="SPOUT_MTase"/>
    <property type="match status" value="1"/>
</dbReference>
<dbReference type="PIRSF" id="PIRSF004505">
    <property type="entry name" value="MT_bac"/>
    <property type="match status" value="1"/>
</dbReference>
<dbReference type="SUPFAM" id="SSF75217">
    <property type="entry name" value="alpha/beta knot"/>
    <property type="match status" value="1"/>
</dbReference>
<protein>
    <recommendedName>
        <fullName evidence="1">Ribosomal RNA large subunit methyltransferase H</fullName>
        <ecNumber evidence="1">2.1.1.177</ecNumber>
    </recommendedName>
    <alternativeName>
        <fullName evidence="1">23S rRNA (pseudouridine1915-N3)-methyltransferase</fullName>
    </alternativeName>
    <alternativeName>
        <fullName evidence="1">23S rRNA m3Psi1915 methyltransferase</fullName>
    </alternativeName>
    <alternativeName>
        <fullName evidence="1">rRNA (pseudouridine-N3-)-methyltransferase RlmH</fullName>
    </alternativeName>
</protein>
<gene>
    <name evidence="1" type="primary">rlmH</name>
    <name type="ordered locus">Sputcn32_2868</name>
</gene>
<reference key="1">
    <citation type="submission" date="2007-04" db="EMBL/GenBank/DDBJ databases">
        <title>Complete sequence of Shewanella putrefaciens CN-32.</title>
        <authorList>
            <consortium name="US DOE Joint Genome Institute"/>
            <person name="Copeland A."/>
            <person name="Lucas S."/>
            <person name="Lapidus A."/>
            <person name="Barry K."/>
            <person name="Detter J.C."/>
            <person name="Glavina del Rio T."/>
            <person name="Hammon N."/>
            <person name="Israni S."/>
            <person name="Dalin E."/>
            <person name="Tice H."/>
            <person name="Pitluck S."/>
            <person name="Chain P."/>
            <person name="Malfatti S."/>
            <person name="Shin M."/>
            <person name="Vergez L."/>
            <person name="Schmutz J."/>
            <person name="Larimer F."/>
            <person name="Land M."/>
            <person name="Hauser L."/>
            <person name="Kyrpides N."/>
            <person name="Mikhailova N."/>
            <person name="Romine M.F."/>
            <person name="Fredrickson J."/>
            <person name="Tiedje J."/>
            <person name="Richardson P."/>
        </authorList>
    </citation>
    <scope>NUCLEOTIDE SEQUENCE [LARGE SCALE GENOMIC DNA]</scope>
    <source>
        <strain>CN-32 / ATCC BAA-453</strain>
    </source>
</reference>
<accession>A4Y9F4</accession>
<keyword id="KW-0963">Cytoplasm</keyword>
<keyword id="KW-0489">Methyltransferase</keyword>
<keyword id="KW-0698">rRNA processing</keyword>
<keyword id="KW-0949">S-adenosyl-L-methionine</keyword>
<keyword id="KW-0808">Transferase</keyword>
<organism>
    <name type="scientific">Shewanella putrefaciens (strain CN-32 / ATCC BAA-453)</name>
    <dbReference type="NCBI Taxonomy" id="319224"/>
    <lineage>
        <taxon>Bacteria</taxon>
        <taxon>Pseudomonadati</taxon>
        <taxon>Pseudomonadota</taxon>
        <taxon>Gammaproteobacteria</taxon>
        <taxon>Alteromonadales</taxon>
        <taxon>Shewanellaceae</taxon>
        <taxon>Shewanella</taxon>
    </lineage>
</organism>
<comment type="function">
    <text evidence="1">Specifically methylates the pseudouridine at position 1915 (m3Psi1915) in 23S rRNA.</text>
</comment>
<comment type="catalytic activity">
    <reaction evidence="1">
        <text>pseudouridine(1915) in 23S rRNA + S-adenosyl-L-methionine = N(3)-methylpseudouridine(1915) in 23S rRNA + S-adenosyl-L-homocysteine + H(+)</text>
        <dbReference type="Rhea" id="RHEA:42752"/>
        <dbReference type="Rhea" id="RHEA-COMP:10221"/>
        <dbReference type="Rhea" id="RHEA-COMP:10222"/>
        <dbReference type="ChEBI" id="CHEBI:15378"/>
        <dbReference type="ChEBI" id="CHEBI:57856"/>
        <dbReference type="ChEBI" id="CHEBI:59789"/>
        <dbReference type="ChEBI" id="CHEBI:65314"/>
        <dbReference type="ChEBI" id="CHEBI:74486"/>
        <dbReference type="EC" id="2.1.1.177"/>
    </reaction>
</comment>
<comment type="subunit">
    <text evidence="1">Homodimer.</text>
</comment>
<comment type="subcellular location">
    <subcellularLocation>
        <location evidence="1">Cytoplasm</location>
    </subcellularLocation>
</comment>
<comment type="similarity">
    <text evidence="1">Belongs to the RNA methyltransferase RlmH family.</text>
</comment>
<feature type="chain" id="PRO_1000061839" description="Ribosomal RNA large subunit methyltransferase H">
    <location>
        <begin position="1"/>
        <end position="156"/>
    </location>
</feature>
<feature type="binding site" evidence="1">
    <location>
        <position position="73"/>
    </location>
    <ligand>
        <name>S-adenosyl-L-methionine</name>
        <dbReference type="ChEBI" id="CHEBI:59789"/>
    </ligand>
</feature>
<feature type="binding site" evidence="1">
    <location>
        <position position="104"/>
    </location>
    <ligand>
        <name>S-adenosyl-L-methionine</name>
        <dbReference type="ChEBI" id="CHEBI:59789"/>
    </ligand>
</feature>
<feature type="binding site" evidence="1">
    <location>
        <begin position="123"/>
        <end position="128"/>
    </location>
    <ligand>
        <name>S-adenosyl-L-methionine</name>
        <dbReference type="ChEBI" id="CHEBI:59789"/>
    </ligand>
</feature>
<proteinExistence type="inferred from homology"/>
<evidence type="ECO:0000255" key="1">
    <source>
        <dbReference type="HAMAP-Rule" id="MF_00658"/>
    </source>
</evidence>
<sequence>MKLQLIAVGTRMPDWVTRGFEEYQRRFPRDMALELIEIPAGKRGKNADIVRILQKEGEQMLAAIPKGNHIVSLDLPGKNWTTPELATALSKWQLDGRDVSLLVGGPEGLAPACKDAAHQSWCLSALTLPHPLVRIVVAESLYRAWSVNTNHPYHRE</sequence>